<gene>
    <name type="primary">rps3</name>
</gene>
<accession>P06586</accession>
<evidence type="ECO:0000250" key="1"/>
<evidence type="ECO:0000305" key="2"/>
<feature type="chain" id="PRO_0000130287" description="Small ribosomal subunit protein uS3c">
    <location>
        <begin position="1"/>
        <end position="224"/>
    </location>
</feature>
<feature type="domain" description="KH type-2">
    <location>
        <begin position="43"/>
        <end position="124"/>
    </location>
</feature>
<proteinExistence type="inferred from homology"/>
<sequence length="224" mass="25916">MGQKINPLGFRLGTTQNHHSFWFAQPKNYSEGLQEDKKIRNCIKNYIQKNRKKGSNRKMESDSSSEVITHIEIQKEIDTIHVIIHIGFPNLLKKKGAIEELEKDLQKEVNSVNQRLNIAIEKVKEPYRQPNILAEYIAFQLKNRVSFRKAMKKAIELTKKADIKGIKIQIAGRLAGKEIARAECIKKGRLPLQTIRAKIDYCCYPIRTIYGVLGVKIWIFVEEE</sequence>
<name>RR3_MAIZE</name>
<protein>
    <recommendedName>
        <fullName evidence="2">Small ribosomal subunit protein uS3c</fullName>
    </recommendedName>
    <alternativeName>
        <fullName>30S ribosomal protein S3, chloroplastic</fullName>
    </alternativeName>
</protein>
<dbReference type="EMBL" id="Y00340">
    <property type="protein sequence ID" value="CAA68427.1"/>
    <property type="molecule type" value="Genomic_DNA"/>
</dbReference>
<dbReference type="EMBL" id="X86563">
    <property type="protein sequence ID" value="CAA60324.1"/>
    <property type="molecule type" value="Genomic_DNA"/>
</dbReference>
<dbReference type="PIR" id="S58590">
    <property type="entry name" value="S58590"/>
</dbReference>
<dbReference type="RefSeq" id="NP_043062.1">
    <property type="nucleotide sequence ID" value="NC_001666.2"/>
</dbReference>
<dbReference type="SMR" id="P06586"/>
<dbReference type="FunCoup" id="P06586">
    <property type="interactions" value="459"/>
</dbReference>
<dbReference type="STRING" id="4577.P06586"/>
<dbReference type="PaxDb" id="4577-GRMZM2G448151_P01"/>
<dbReference type="EnsemblPlants" id="Zm00001eb039190_T001">
    <property type="protein sequence ID" value="Zm00001eb039190_P001"/>
    <property type="gene ID" value="Zm00001eb039190"/>
</dbReference>
<dbReference type="EnsemblPlants" id="Zm00001eb097380_T001">
    <property type="protein sequence ID" value="Zm00001eb097380_P001"/>
    <property type="gene ID" value="Zm00001eb097380"/>
</dbReference>
<dbReference type="GeneID" id="845237"/>
<dbReference type="Gramene" id="Zm00001eb039190_T001">
    <property type="protein sequence ID" value="Zm00001eb039190_P001"/>
    <property type="gene ID" value="Zm00001eb039190"/>
</dbReference>
<dbReference type="Gramene" id="Zm00001eb097380_T001">
    <property type="protein sequence ID" value="Zm00001eb097380_P001"/>
    <property type="gene ID" value="Zm00001eb097380"/>
</dbReference>
<dbReference type="KEGG" id="zma:845237"/>
<dbReference type="MaizeGDB" id="66303"/>
<dbReference type="eggNOG" id="ENOG502SHG6">
    <property type="taxonomic scope" value="Eukaryota"/>
</dbReference>
<dbReference type="HOGENOM" id="CLU_058591_0_2_1"/>
<dbReference type="InParanoid" id="P06586"/>
<dbReference type="OMA" id="NANTTYG"/>
<dbReference type="OrthoDB" id="599002at2759"/>
<dbReference type="Proteomes" id="UP000007305">
    <property type="component" value="Chloroplast"/>
</dbReference>
<dbReference type="ExpressionAtlas" id="P06586">
    <property type="expression patterns" value="baseline and differential"/>
</dbReference>
<dbReference type="GO" id="GO:0009507">
    <property type="term" value="C:chloroplast"/>
    <property type="evidence" value="ECO:0007669"/>
    <property type="project" value="UniProtKB-SubCell"/>
</dbReference>
<dbReference type="GO" id="GO:0022627">
    <property type="term" value="C:cytosolic small ribosomal subunit"/>
    <property type="evidence" value="ECO:0000318"/>
    <property type="project" value="GO_Central"/>
</dbReference>
<dbReference type="GO" id="GO:0019843">
    <property type="term" value="F:rRNA binding"/>
    <property type="evidence" value="ECO:0007669"/>
    <property type="project" value="UniProtKB-KW"/>
</dbReference>
<dbReference type="GO" id="GO:0003735">
    <property type="term" value="F:structural constituent of ribosome"/>
    <property type="evidence" value="ECO:0000318"/>
    <property type="project" value="GO_Central"/>
</dbReference>
<dbReference type="GO" id="GO:0006412">
    <property type="term" value="P:translation"/>
    <property type="evidence" value="ECO:0007669"/>
    <property type="project" value="UniProtKB-UniRule"/>
</dbReference>
<dbReference type="CDD" id="cd02412">
    <property type="entry name" value="KH-II_30S_S3"/>
    <property type="match status" value="1"/>
</dbReference>
<dbReference type="FunFam" id="3.30.1140.32:FF:000003">
    <property type="entry name" value="30S ribosomal protein S3, chloroplastic"/>
    <property type="match status" value="1"/>
</dbReference>
<dbReference type="FunFam" id="3.30.300.20:FF:000008">
    <property type="entry name" value="30S ribosomal protein S3, chloroplastic"/>
    <property type="match status" value="1"/>
</dbReference>
<dbReference type="Gene3D" id="3.30.300.20">
    <property type="match status" value="1"/>
</dbReference>
<dbReference type="Gene3D" id="3.30.1140.32">
    <property type="entry name" value="Ribosomal protein S3, C-terminal domain"/>
    <property type="match status" value="1"/>
</dbReference>
<dbReference type="HAMAP" id="MF_01309_B">
    <property type="entry name" value="Ribosomal_uS3_B"/>
    <property type="match status" value="1"/>
</dbReference>
<dbReference type="InterPro" id="IPR015946">
    <property type="entry name" value="KH_dom-like_a/b"/>
</dbReference>
<dbReference type="InterPro" id="IPR009019">
    <property type="entry name" value="KH_sf_prok-type"/>
</dbReference>
<dbReference type="InterPro" id="IPR036419">
    <property type="entry name" value="Ribosomal_S3_C_sf"/>
</dbReference>
<dbReference type="InterPro" id="IPR005704">
    <property type="entry name" value="Ribosomal_uS3_bac-typ"/>
</dbReference>
<dbReference type="InterPro" id="IPR001351">
    <property type="entry name" value="Ribosomal_uS3_C"/>
</dbReference>
<dbReference type="InterPro" id="IPR018280">
    <property type="entry name" value="Ribosomal_uS3_CS"/>
</dbReference>
<dbReference type="NCBIfam" id="TIGR01009">
    <property type="entry name" value="rpsC_bact"/>
    <property type="match status" value="1"/>
</dbReference>
<dbReference type="PANTHER" id="PTHR11760">
    <property type="entry name" value="30S/40S RIBOSOMAL PROTEIN S3"/>
    <property type="match status" value="1"/>
</dbReference>
<dbReference type="PANTHER" id="PTHR11760:SF42">
    <property type="entry name" value="SMALL RIBOSOMAL SUBUNIT PROTEIN US3C"/>
    <property type="match status" value="1"/>
</dbReference>
<dbReference type="Pfam" id="PF00189">
    <property type="entry name" value="Ribosomal_S3_C"/>
    <property type="match status" value="1"/>
</dbReference>
<dbReference type="SUPFAM" id="SSF54814">
    <property type="entry name" value="Prokaryotic type KH domain (KH-domain type II)"/>
    <property type="match status" value="1"/>
</dbReference>
<dbReference type="SUPFAM" id="SSF54821">
    <property type="entry name" value="Ribosomal protein S3 C-terminal domain"/>
    <property type="match status" value="1"/>
</dbReference>
<dbReference type="PROSITE" id="PS00548">
    <property type="entry name" value="RIBOSOMAL_S3"/>
    <property type="match status" value="1"/>
</dbReference>
<geneLocation type="chloroplast"/>
<comment type="subunit">
    <text evidence="1">Part of the 30S ribosomal subunit.</text>
</comment>
<comment type="subcellular location">
    <subcellularLocation>
        <location>Plastid</location>
        <location>Chloroplast</location>
    </subcellularLocation>
</comment>
<comment type="similarity">
    <text evidence="2">Belongs to the universal ribosomal protein uS3 family.</text>
</comment>
<keyword id="KW-0150">Chloroplast</keyword>
<keyword id="KW-0934">Plastid</keyword>
<keyword id="KW-1185">Reference proteome</keyword>
<keyword id="KW-0687">Ribonucleoprotein</keyword>
<keyword id="KW-0689">Ribosomal protein</keyword>
<keyword id="KW-0694">RNA-binding</keyword>
<keyword id="KW-0699">rRNA-binding</keyword>
<reference key="1">
    <citation type="journal article" date="1987" name="Nucleic Acids Res.">
        <title>The sequence of the maize plastid encoded rps3 locus.</title>
        <authorList>
            <person name="McLaughlin W.E."/>
            <person name="Larrinua I.M."/>
        </authorList>
    </citation>
    <scope>NUCLEOTIDE SEQUENCE [GENOMIC DNA]</scope>
</reference>
<reference key="2">
    <citation type="journal article" date="1995" name="J. Mol. Biol.">
        <title>Complete sequence of the maize chloroplast genome: gene content, hotspots of divergence and fine tuning of genetic information by transcript editing.</title>
        <authorList>
            <person name="Maier R.M."/>
            <person name="Neckermann K."/>
            <person name="Igloi G.L."/>
            <person name="Koessel H."/>
        </authorList>
    </citation>
    <scope>NUCLEOTIDE SEQUENCE [LARGE SCALE GENOMIC DNA]</scope>
    <source>
        <strain>cv. B73</strain>
    </source>
</reference>
<organism>
    <name type="scientific">Zea mays</name>
    <name type="common">Maize</name>
    <dbReference type="NCBI Taxonomy" id="4577"/>
    <lineage>
        <taxon>Eukaryota</taxon>
        <taxon>Viridiplantae</taxon>
        <taxon>Streptophyta</taxon>
        <taxon>Embryophyta</taxon>
        <taxon>Tracheophyta</taxon>
        <taxon>Spermatophyta</taxon>
        <taxon>Magnoliopsida</taxon>
        <taxon>Liliopsida</taxon>
        <taxon>Poales</taxon>
        <taxon>Poaceae</taxon>
        <taxon>PACMAD clade</taxon>
        <taxon>Panicoideae</taxon>
        <taxon>Andropogonodae</taxon>
        <taxon>Andropogoneae</taxon>
        <taxon>Tripsacinae</taxon>
        <taxon>Zea</taxon>
    </lineage>
</organism>